<organism>
    <name type="scientific">Aquifex aeolicus (strain VF5)</name>
    <dbReference type="NCBI Taxonomy" id="224324"/>
    <lineage>
        <taxon>Bacteria</taxon>
        <taxon>Pseudomonadati</taxon>
        <taxon>Aquificota</taxon>
        <taxon>Aquificia</taxon>
        <taxon>Aquificales</taxon>
        <taxon>Aquificaceae</taxon>
        <taxon>Aquifex</taxon>
    </lineage>
</organism>
<proteinExistence type="inferred from homology"/>
<accession>O67415</accession>
<feature type="chain" id="PRO_0000159070" description="Putative sulfur carrier protein aq_1421">
    <location>
        <begin position="1"/>
        <end position="197"/>
    </location>
</feature>
<feature type="active site" description="Cysteine persulfide intermediate" evidence="1">
    <location>
        <position position="17"/>
    </location>
</feature>
<gene>
    <name type="ordered locus">aq_1421</name>
</gene>
<dbReference type="EMBL" id="AE000657">
    <property type="protein sequence ID" value="AAC07381.1"/>
    <property type="molecule type" value="Genomic_DNA"/>
</dbReference>
<dbReference type="PIR" id="E70423">
    <property type="entry name" value="E70423"/>
</dbReference>
<dbReference type="RefSeq" id="NP_213980.1">
    <property type="nucleotide sequence ID" value="NC_000918.1"/>
</dbReference>
<dbReference type="RefSeq" id="WP_010880918.1">
    <property type="nucleotide sequence ID" value="NC_000918.1"/>
</dbReference>
<dbReference type="SMR" id="O67415"/>
<dbReference type="STRING" id="224324.aq_1421"/>
<dbReference type="EnsemblBacteria" id="AAC07381">
    <property type="protein sequence ID" value="AAC07381"/>
    <property type="gene ID" value="aq_1421"/>
</dbReference>
<dbReference type="KEGG" id="aae:aq_1421"/>
<dbReference type="eggNOG" id="COG0425">
    <property type="taxonomic scope" value="Bacteria"/>
</dbReference>
<dbReference type="HOGENOM" id="CLU_1433852_0_0_0"/>
<dbReference type="InParanoid" id="O67415"/>
<dbReference type="OrthoDB" id="14621at2"/>
<dbReference type="Proteomes" id="UP000000798">
    <property type="component" value="Chromosome"/>
</dbReference>
<dbReference type="Gene3D" id="3.30.110.40">
    <property type="entry name" value="TusA-like domain"/>
    <property type="match status" value="1"/>
</dbReference>
<dbReference type="InterPro" id="IPR021778">
    <property type="entry name" value="Se/S_carrier-like"/>
</dbReference>
<dbReference type="InterPro" id="IPR001455">
    <property type="entry name" value="TusA-like"/>
</dbReference>
<dbReference type="InterPro" id="IPR036868">
    <property type="entry name" value="TusA-like_sf"/>
</dbReference>
<dbReference type="PANTHER" id="PTHR33279:SF2">
    <property type="entry name" value="SULFUR CARRIER PROTEIN TUSA"/>
    <property type="match status" value="1"/>
</dbReference>
<dbReference type="PANTHER" id="PTHR33279">
    <property type="entry name" value="SULFUR CARRIER PROTEIN YEDF-RELATED"/>
    <property type="match status" value="1"/>
</dbReference>
<dbReference type="Pfam" id="PF11823">
    <property type="entry name" value="Se_S_carrier"/>
    <property type="match status" value="1"/>
</dbReference>
<dbReference type="Pfam" id="PF01206">
    <property type="entry name" value="TusA"/>
    <property type="match status" value="1"/>
</dbReference>
<dbReference type="SUPFAM" id="SSF64307">
    <property type="entry name" value="SirA-like"/>
    <property type="match status" value="1"/>
</dbReference>
<dbReference type="PROSITE" id="PS01148">
    <property type="entry name" value="UPF0033"/>
    <property type="match status" value="1"/>
</dbReference>
<reference key="1">
    <citation type="journal article" date="1998" name="Nature">
        <title>The complete genome of the hyperthermophilic bacterium Aquifex aeolicus.</title>
        <authorList>
            <person name="Deckert G."/>
            <person name="Warren P.V."/>
            <person name="Gaasterland T."/>
            <person name="Young W.G."/>
            <person name="Lenox A.L."/>
            <person name="Graham D.E."/>
            <person name="Overbeek R."/>
            <person name="Snead M.A."/>
            <person name="Keller M."/>
            <person name="Aujay M."/>
            <person name="Huber R."/>
            <person name="Feldman R.A."/>
            <person name="Short J.M."/>
            <person name="Olsen G.J."/>
            <person name="Swanson R.V."/>
        </authorList>
    </citation>
    <scope>NUCLEOTIDE SEQUENCE [LARGE SCALE GENOMIC DNA]</scope>
    <source>
        <strain>VF5</strain>
    </source>
</reference>
<comment type="similarity">
    <text evidence="2">Belongs to the sulfur carrier protein TusA family.</text>
</comment>
<name>Y1421_AQUAE</name>
<protein>
    <recommendedName>
        <fullName>Putative sulfur carrier protein aq_1421</fullName>
    </recommendedName>
</protein>
<evidence type="ECO:0000250" key="1">
    <source>
        <dbReference type="UniProtKB" id="P0A890"/>
    </source>
</evidence>
<evidence type="ECO:0000305" key="2"/>
<sequence length="197" mass="22604">MENVKEDRTLDLSGLSCPLPVVMTSETMRKMEEGQVLKVISTDPGFERDIWSWAKQSGNILLKVEKEDGKTIAYIKKASEAHEPSLWYWIKFHSLGVKLHIRQFCIQINPFVKKPTHFITFSAISEGTRAEKELKKLGEKDAVLIPIPDEIDPRCGVVLAVHGEKKAREIYEKLKDMDIAVEAIYEKKGKEYERVYP</sequence>
<keyword id="KW-1185">Reference proteome</keyword>